<comment type="subcellular location">
    <subcellularLocation>
        <location>Cytoplasm</location>
    </subcellularLocation>
    <subcellularLocation>
        <location evidence="1">Cell membrane</location>
        <topology evidence="1">Peripheral membrane protein</topology>
        <orientation evidence="1">Cytoplasmic side</orientation>
    </subcellularLocation>
</comment>
<comment type="similarity">
    <text evidence="1">Belongs to the HflD family.</text>
</comment>
<organism>
    <name type="scientific">Buchnera aphidicola subsp. Acyrthosiphon pisum (strain 5A)</name>
    <dbReference type="NCBI Taxonomy" id="563178"/>
    <lineage>
        <taxon>Bacteria</taxon>
        <taxon>Pseudomonadati</taxon>
        <taxon>Pseudomonadota</taxon>
        <taxon>Gammaproteobacteria</taxon>
        <taxon>Enterobacterales</taxon>
        <taxon>Erwiniaceae</taxon>
        <taxon>Buchnera</taxon>
    </lineage>
</organism>
<gene>
    <name evidence="1" type="primary">hflD</name>
    <name type="ordered locus">BUAP5A_257</name>
</gene>
<protein>
    <recommendedName>
        <fullName evidence="1">High frequency lysogenization protein HflD homolog</fullName>
    </recommendedName>
</protein>
<feature type="chain" id="PRO_1000200466" description="High frequency lysogenization protein HflD homolog">
    <location>
        <begin position="1"/>
        <end position="211"/>
    </location>
</feature>
<name>HFLD_BUCA5</name>
<keyword id="KW-1003">Cell membrane</keyword>
<keyword id="KW-0963">Cytoplasm</keyword>
<keyword id="KW-0472">Membrane</keyword>
<proteinExistence type="inferred from homology"/>
<sequence>MKKIHLITLSLAGICQSAHLVQQLAYSGKCDSNAFSICLKSILEINPTSFIAIYGNHEKNLIIGLEILLSTLTFSSFSYSYIELIKYISNMMIIEKKLKKSRTAIYSLKNKISVISSEYYLNYNIKNLTRKLGELYLEIISSLGSRIVIKGIKDFLQDHQIQEKIRCLLFSGIRAIVLWKQYGGNQLQLIYFRYFIIKKAKKILYHLKDAT</sequence>
<accession>B8D955</accession>
<evidence type="ECO:0000255" key="1">
    <source>
        <dbReference type="HAMAP-Rule" id="MF_00695"/>
    </source>
</evidence>
<reference key="1">
    <citation type="journal article" date="2009" name="Science">
        <title>The dynamics and time scale of ongoing genomic erosion in symbiotic bacteria.</title>
        <authorList>
            <person name="Moran N.A."/>
            <person name="McLaughlin H.J."/>
            <person name="Sorek R."/>
        </authorList>
    </citation>
    <scope>NUCLEOTIDE SEQUENCE [LARGE SCALE GENOMIC DNA]</scope>
    <source>
        <strain>5A</strain>
    </source>
</reference>
<dbReference type="EMBL" id="CP001161">
    <property type="protein sequence ID" value="ACL30626.1"/>
    <property type="molecule type" value="Genomic_DNA"/>
</dbReference>
<dbReference type="RefSeq" id="WP_009874216.1">
    <property type="nucleotide sequence ID" value="NC_011833.1"/>
</dbReference>
<dbReference type="SMR" id="B8D955"/>
<dbReference type="KEGG" id="bap:BUAP5A_257"/>
<dbReference type="HOGENOM" id="CLU_098920_0_0_6"/>
<dbReference type="OrthoDB" id="9788031at2"/>
<dbReference type="Proteomes" id="UP000006904">
    <property type="component" value="Chromosome"/>
</dbReference>
<dbReference type="GO" id="GO:0005737">
    <property type="term" value="C:cytoplasm"/>
    <property type="evidence" value="ECO:0007669"/>
    <property type="project" value="UniProtKB-SubCell"/>
</dbReference>
<dbReference type="GO" id="GO:0005886">
    <property type="term" value="C:plasma membrane"/>
    <property type="evidence" value="ECO:0007669"/>
    <property type="project" value="UniProtKB-SubCell"/>
</dbReference>
<dbReference type="Gene3D" id="1.10.3890.10">
    <property type="entry name" value="HflD-like"/>
    <property type="match status" value="1"/>
</dbReference>
<dbReference type="HAMAP" id="MF_00695">
    <property type="entry name" value="HflD_protein"/>
    <property type="match status" value="1"/>
</dbReference>
<dbReference type="InterPro" id="IPR007451">
    <property type="entry name" value="HflD"/>
</dbReference>
<dbReference type="InterPro" id="IPR035932">
    <property type="entry name" value="HflD-like_sf"/>
</dbReference>
<dbReference type="NCBIfam" id="NF001246">
    <property type="entry name" value="PRK00218.1-2"/>
    <property type="match status" value="1"/>
</dbReference>
<dbReference type="NCBIfam" id="NF001248">
    <property type="entry name" value="PRK00218.1-4"/>
    <property type="match status" value="1"/>
</dbReference>
<dbReference type="PANTHER" id="PTHR38100">
    <property type="entry name" value="HIGH FREQUENCY LYSOGENIZATION PROTEIN HFLD"/>
    <property type="match status" value="1"/>
</dbReference>
<dbReference type="PANTHER" id="PTHR38100:SF1">
    <property type="entry name" value="HIGH FREQUENCY LYSOGENIZATION PROTEIN HFLD"/>
    <property type="match status" value="1"/>
</dbReference>
<dbReference type="Pfam" id="PF04356">
    <property type="entry name" value="DUF489"/>
    <property type="match status" value="1"/>
</dbReference>
<dbReference type="SUPFAM" id="SSF101322">
    <property type="entry name" value="YcfC-like"/>
    <property type="match status" value="1"/>
</dbReference>